<proteinExistence type="evidence at protein level"/>
<name>DEF1_CLITE</name>
<keyword id="KW-0929">Antimicrobial</keyword>
<keyword id="KW-0903">Direct protein sequencing</keyword>
<keyword id="KW-1015">Disulfide bond</keyword>
<keyword id="KW-0295">Fungicide</keyword>
<keyword id="KW-0611">Plant defense</keyword>
<keyword id="KW-0964">Secreted</keyword>
<organism>
    <name type="scientific">Clitoria ternatea</name>
    <name type="common">Butterfly pea</name>
    <dbReference type="NCBI Taxonomy" id="43366"/>
    <lineage>
        <taxon>Eukaryota</taxon>
        <taxon>Viridiplantae</taxon>
        <taxon>Streptophyta</taxon>
        <taxon>Embryophyta</taxon>
        <taxon>Tracheophyta</taxon>
        <taxon>Spermatophyta</taxon>
        <taxon>Magnoliopsida</taxon>
        <taxon>eudicotyledons</taxon>
        <taxon>Gunneridae</taxon>
        <taxon>Pentapetalae</taxon>
        <taxon>rosids</taxon>
        <taxon>fabids</taxon>
        <taxon>Fabales</taxon>
        <taxon>Fabaceae</taxon>
        <taxon>Papilionoideae</taxon>
        <taxon>50 kb inversion clade</taxon>
        <taxon>NPAAA clade</taxon>
        <taxon>indigoferoid/millettioid clade</taxon>
        <taxon>Phaseoleae</taxon>
        <taxon>Clitoria</taxon>
    </lineage>
</organism>
<accession>Q7M1F2</accession>
<dbReference type="PIR" id="S66219">
    <property type="entry name" value="S66219"/>
</dbReference>
<dbReference type="SMR" id="Q7M1F2"/>
<dbReference type="GO" id="GO:0005576">
    <property type="term" value="C:extracellular region"/>
    <property type="evidence" value="ECO:0007669"/>
    <property type="project" value="UniProtKB-SubCell"/>
</dbReference>
<dbReference type="GO" id="GO:0050832">
    <property type="term" value="P:defense response to fungus"/>
    <property type="evidence" value="ECO:0007669"/>
    <property type="project" value="UniProtKB-KW"/>
</dbReference>
<dbReference type="GO" id="GO:0031640">
    <property type="term" value="P:killing of cells of another organism"/>
    <property type="evidence" value="ECO:0007669"/>
    <property type="project" value="UniProtKB-KW"/>
</dbReference>
<dbReference type="Gene3D" id="3.30.30.10">
    <property type="entry name" value="Knottin, scorpion toxin-like"/>
    <property type="match status" value="1"/>
</dbReference>
<dbReference type="InterPro" id="IPR003614">
    <property type="entry name" value="Scorpion_toxin-like"/>
</dbReference>
<dbReference type="InterPro" id="IPR036574">
    <property type="entry name" value="Scorpion_toxin-like_sf"/>
</dbReference>
<dbReference type="Pfam" id="PF00304">
    <property type="entry name" value="Gamma-thionin"/>
    <property type="match status" value="1"/>
</dbReference>
<dbReference type="SMART" id="SM00505">
    <property type="entry name" value="Knot1"/>
    <property type="match status" value="1"/>
</dbReference>
<dbReference type="SUPFAM" id="SSF57095">
    <property type="entry name" value="Scorpion toxin-like"/>
    <property type="match status" value="1"/>
</dbReference>
<feature type="chain" id="PRO_0000366951" description="Defensin-like protein 1">
    <location>
        <begin position="1"/>
        <end position="49"/>
    </location>
</feature>
<feature type="disulfide bond" evidence="1">
    <location>
        <begin position="3"/>
        <end position="49"/>
    </location>
</feature>
<feature type="disulfide bond" evidence="1">
    <location>
        <begin position="14"/>
        <end position="35"/>
    </location>
</feature>
<feature type="disulfide bond" evidence="1">
    <location>
        <begin position="20"/>
        <end position="43"/>
    </location>
</feature>
<feature type="disulfide bond" evidence="1">
    <location>
        <begin position="24"/>
        <end position="45"/>
    </location>
</feature>
<evidence type="ECO:0000250" key="1"/>
<evidence type="ECO:0000269" key="2">
    <source>
    </source>
</evidence>
<evidence type="ECO:0000269" key="3">
    <source>
    </source>
</evidence>
<evidence type="ECO:0000305" key="4"/>
<comment type="function">
    <text evidence="2 3">Possesses antimicrobial activity sensitive to inorganic cations. Binds specifically to the fungal plasma membrane. Has no inhibitory effect on insect gut alpha-amylase.</text>
</comment>
<comment type="subcellular location">
    <subcellularLocation>
        <location evidence="1">Secreted</location>
    </subcellularLocation>
</comment>
<comment type="similarity">
    <text evidence="4">Belongs to the DEFL family.</text>
</comment>
<protein>
    <recommendedName>
        <fullName>Defensin-like protein 1</fullName>
    </recommendedName>
    <alternativeName>
        <fullName>Cysteine-rich antimicrobial protein 1</fullName>
    </alternativeName>
    <alternativeName>
        <fullName>Defensin AMP1</fullName>
        <shortName>CtAMP1</shortName>
    </alternativeName>
</protein>
<sequence>NLCERASLTWTGNCGNTGHCDTQCRNWESAKHGACHKRGNWKCFCYFNC</sequence>
<reference key="1">
    <citation type="journal article" date="1995" name="FEBS Lett.">
        <title>Isolation and characterisation of plant defensins from seeds of Asteraceae, Fabaceae, Hippocastanaceae and Saxifragaceae.</title>
        <authorList>
            <person name="Osborn R.W."/>
            <person name="De Samblanx G.W."/>
            <person name="Thevissen K."/>
            <person name="Goderis I."/>
            <person name="Torrekens S."/>
            <person name="Van Leuven F."/>
            <person name="Attenborough S."/>
            <person name="Rees S.B."/>
            <person name="Broekaert W.F."/>
        </authorList>
    </citation>
    <scope>PROTEIN SEQUENCE</scope>
    <scope>FUNCTION</scope>
    <source>
        <tissue>Seed</tissue>
    </source>
</reference>
<reference key="2">
    <citation type="journal article" date="2000" name="Mol. Plant Microbe Interact.">
        <title>Specific binding sites for an antifungal plant defensin from Dahlia (Dahlia merckii) on fungal cells are required for antifungal activity.</title>
        <authorList>
            <person name="Thevissen K."/>
            <person name="Osborn R.W."/>
            <person name="Acland D.P."/>
            <person name="Broekaert W.F."/>
        </authorList>
    </citation>
    <scope>FUNCTION</scope>
</reference>